<accession>A5WDY8</accession>
<gene>
    <name evidence="1" type="primary">aroC</name>
    <name type="ordered locus">PsycPRwf_0929</name>
</gene>
<keyword id="KW-0028">Amino-acid biosynthesis</keyword>
<keyword id="KW-0057">Aromatic amino acid biosynthesis</keyword>
<keyword id="KW-0274">FAD</keyword>
<keyword id="KW-0285">Flavoprotein</keyword>
<keyword id="KW-0288">FMN</keyword>
<keyword id="KW-0456">Lyase</keyword>
<keyword id="KW-0521">NADP</keyword>
<sequence length="367" mass="39253">MAGNSIGQAFKVTTCGESHGAGLMAIVDGVPSGLPLTSEDLQLDLDRRKPGTSKFATQRREPDEVEIISGVFEGKTTGTSIGLLIRNTNQKSKDYSDIKDTFRPGHADYTYSMKYGFRDYRGGGRSSARETAMRVAAGAIAKKYLKQRLGIEIHGHVVLMGNEAAAVTDPNQIDWQFVNSNPFFCADPDALPRFEALIERLRKEGTSCGAKLEVIASGVPVGLGEPVFDRLDADIAHAMMSINAVKGVEIGDGMRVAEQFGHIARDELTPDGFTANHSGGILGGISSGQDIKVSIALKPTSSITTPGKSIDQQGQPVDMLTKGRHDPCVGVRATPIAEAMLAIVLLDHYLRHRGQNADVTQPVAPIA</sequence>
<name>AROC_PSYWF</name>
<dbReference type="EC" id="4.2.3.5" evidence="1"/>
<dbReference type="EMBL" id="CP000713">
    <property type="protein sequence ID" value="ABQ93879.1"/>
    <property type="molecule type" value="Genomic_DNA"/>
</dbReference>
<dbReference type="SMR" id="A5WDY8"/>
<dbReference type="STRING" id="349106.PsycPRwf_0929"/>
<dbReference type="KEGG" id="prw:PsycPRwf_0929"/>
<dbReference type="eggNOG" id="COG0082">
    <property type="taxonomic scope" value="Bacteria"/>
</dbReference>
<dbReference type="HOGENOM" id="CLU_034547_0_2_6"/>
<dbReference type="UniPathway" id="UPA00053">
    <property type="reaction ID" value="UER00090"/>
</dbReference>
<dbReference type="GO" id="GO:0005829">
    <property type="term" value="C:cytosol"/>
    <property type="evidence" value="ECO:0007669"/>
    <property type="project" value="TreeGrafter"/>
</dbReference>
<dbReference type="GO" id="GO:0004107">
    <property type="term" value="F:chorismate synthase activity"/>
    <property type="evidence" value="ECO:0007669"/>
    <property type="project" value="UniProtKB-UniRule"/>
</dbReference>
<dbReference type="GO" id="GO:0010181">
    <property type="term" value="F:FMN binding"/>
    <property type="evidence" value="ECO:0007669"/>
    <property type="project" value="TreeGrafter"/>
</dbReference>
<dbReference type="GO" id="GO:0008652">
    <property type="term" value="P:amino acid biosynthetic process"/>
    <property type="evidence" value="ECO:0007669"/>
    <property type="project" value="UniProtKB-KW"/>
</dbReference>
<dbReference type="GO" id="GO:0009073">
    <property type="term" value="P:aromatic amino acid family biosynthetic process"/>
    <property type="evidence" value="ECO:0007669"/>
    <property type="project" value="UniProtKB-KW"/>
</dbReference>
<dbReference type="GO" id="GO:0009423">
    <property type="term" value="P:chorismate biosynthetic process"/>
    <property type="evidence" value="ECO:0007669"/>
    <property type="project" value="UniProtKB-UniRule"/>
</dbReference>
<dbReference type="CDD" id="cd07304">
    <property type="entry name" value="Chorismate_synthase"/>
    <property type="match status" value="1"/>
</dbReference>
<dbReference type="FunFam" id="3.60.150.10:FF:000001">
    <property type="entry name" value="Chorismate synthase"/>
    <property type="match status" value="1"/>
</dbReference>
<dbReference type="Gene3D" id="3.60.150.10">
    <property type="entry name" value="Chorismate synthase AroC"/>
    <property type="match status" value="1"/>
</dbReference>
<dbReference type="HAMAP" id="MF_00300">
    <property type="entry name" value="Chorismate_synth"/>
    <property type="match status" value="1"/>
</dbReference>
<dbReference type="InterPro" id="IPR000453">
    <property type="entry name" value="Chorismate_synth"/>
</dbReference>
<dbReference type="InterPro" id="IPR035904">
    <property type="entry name" value="Chorismate_synth_AroC_sf"/>
</dbReference>
<dbReference type="InterPro" id="IPR020541">
    <property type="entry name" value="Chorismate_synthase_CS"/>
</dbReference>
<dbReference type="NCBIfam" id="TIGR00033">
    <property type="entry name" value="aroC"/>
    <property type="match status" value="1"/>
</dbReference>
<dbReference type="NCBIfam" id="NF003793">
    <property type="entry name" value="PRK05382.1"/>
    <property type="match status" value="1"/>
</dbReference>
<dbReference type="PANTHER" id="PTHR21085">
    <property type="entry name" value="CHORISMATE SYNTHASE"/>
    <property type="match status" value="1"/>
</dbReference>
<dbReference type="PANTHER" id="PTHR21085:SF0">
    <property type="entry name" value="CHORISMATE SYNTHASE"/>
    <property type="match status" value="1"/>
</dbReference>
<dbReference type="Pfam" id="PF01264">
    <property type="entry name" value="Chorismate_synt"/>
    <property type="match status" value="1"/>
</dbReference>
<dbReference type="PIRSF" id="PIRSF001456">
    <property type="entry name" value="Chorismate_synth"/>
    <property type="match status" value="1"/>
</dbReference>
<dbReference type="SUPFAM" id="SSF103263">
    <property type="entry name" value="Chorismate synthase, AroC"/>
    <property type="match status" value="1"/>
</dbReference>
<dbReference type="PROSITE" id="PS00787">
    <property type="entry name" value="CHORISMATE_SYNTHASE_1"/>
    <property type="match status" value="1"/>
</dbReference>
<dbReference type="PROSITE" id="PS00788">
    <property type="entry name" value="CHORISMATE_SYNTHASE_2"/>
    <property type="match status" value="1"/>
</dbReference>
<dbReference type="PROSITE" id="PS00789">
    <property type="entry name" value="CHORISMATE_SYNTHASE_3"/>
    <property type="match status" value="1"/>
</dbReference>
<feature type="chain" id="PRO_1000071974" description="Chorismate synthase">
    <location>
        <begin position="1"/>
        <end position="367"/>
    </location>
</feature>
<feature type="binding site" evidence="1">
    <location>
        <position position="48"/>
    </location>
    <ligand>
        <name>NADP(+)</name>
        <dbReference type="ChEBI" id="CHEBI:58349"/>
    </ligand>
</feature>
<feature type="binding site" evidence="1">
    <location>
        <begin position="125"/>
        <end position="127"/>
    </location>
    <ligand>
        <name>FMN</name>
        <dbReference type="ChEBI" id="CHEBI:58210"/>
    </ligand>
</feature>
<feature type="binding site" evidence="1">
    <location>
        <begin position="243"/>
        <end position="244"/>
    </location>
    <ligand>
        <name>FMN</name>
        <dbReference type="ChEBI" id="CHEBI:58210"/>
    </ligand>
</feature>
<feature type="binding site" evidence="1">
    <location>
        <position position="283"/>
    </location>
    <ligand>
        <name>FMN</name>
        <dbReference type="ChEBI" id="CHEBI:58210"/>
    </ligand>
</feature>
<feature type="binding site" evidence="1">
    <location>
        <begin position="298"/>
        <end position="302"/>
    </location>
    <ligand>
        <name>FMN</name>
        <dbReference type="ChEBI" id="CHEBI:58210"/>
    </ligand>
</feature>
<feature type="binding site" evidence="1">
    <location>
        <position position="324"/>
    </location>
    <ligand>
        <name>FMN</name>
        <dbReference type="ChEBI" id="CHEBI:58210"/>
    </ligand>
</feature>
<comment type="function">
    <text evidence="1">Catalyzes the anti-1,4-elimination of the C-3 phosphate and the C-6 proR hydrogen from 5-enolpyruvylshikimate-3-phosphate (EPSP) to yield chorismate, which is the branch point compound that serves as the starting substrate for the three terminal pathways of aromatic amino acid biosynthesis. This reaction introduces a second double bond into the aromatic ring system.</text>
</comment>
<comment type="catalytic activity">
    <reaction evidence="1">
        <text>5-O-(1-carboxyvinyl)-3-phosphoshikimate = chorismate + phosphate</text>
        <dbReference type="Rhea" id="RHEA:21020"/>
        <dbReference type="ChEBI" id="CHEBI:29748"/>
        <dbReference type="ChEBI" id="CHEBI:43474"/>
        <dbReference type="ChEBI" id="CHEBI:57701"/>
        <dbReference type="EC" id="4.2.3.5"/>
    </reaction>
</comment>
<comment type="cofactor">
    <cofactor evidence="1">
        <name>FMNH2</name>
        <dbReference type="ChEBI" id="CHEBI:57618"/>
    </cofactor>
    <text evidence="1">Reduced FMN (FMNH(2)).</text>
</comment>
<comment type="pathway">
    <text evidence="1">Metabolic intermediate biosynthesis; chorismate biosynthesis; chorismate from D-erythrose 4-phosphate and phosphoenolpyruvate: step 7/7.</text>
</comment>
<comment type="subunit">
    <text evidence="1">Homotetramer.</text>
</comment>
<comment type="similarity">
    <text evidence="1">Belongs to the chorismate synthase family.</text>
</comment>
<organism>
    <name type="scientific">Psychrobacter sp. (strain PRwf-1)</name>
    <dbReference type="NCBI Taxonomy" id="349106"/>
    <lineage>
        <taxon>Bacteria</taxon>
        <taxon>Pseudomonadati</taxon>
        <taxon>Pseudomonadota</taxon>
        <taxon>Gammaproteobacteria</taxon>
        <taxon>Moraxellales</taxon>
        <taxon>Moraxellaceae</taxon>
        <taxon>Psychrobacter</taxon>
    </lineage>
</organism>
<reference key="1">
    <citation type="submission" date="2007-05" db="EMBL/GenBank/DDBJ databases">
        <title>Complete sequence of chromosome of Psychrobacter sp. PRwf-1.</title>
        <authorList>
            <consortium name="US DOE Joint Genome Institute"/>
            <person name="Copeland A."/>
            <person name="Lucas S."/>
            <person name="Lapidus A."/>
            <person name="Barry K."/>
            <person name="Detter J.C."/>
            <person name="Glavina del Rio T."/>
            <person name="Hammon N."/>
            <person name="Israni S."/>
            <person name="Dalin E."/>
            <person name="Tice H."/>
            <person name="Pitluck S."/>
            <person name="Chain P."/>
            <person name="Malfatti S."/>
            <person name="Shin M."/>
            <person name="Vergez L."/>
            <person name="Schmutz J."/>
            <person name="Larimer F."/>
            <person name="Land M."/>
            <person name="Hauser L."/>
            <person name="Kyrpides N."/>
            <person name="Kim E."/>
            <person name="Tiedje J."/>
            <person name="Richardson P."/>
        </authorList>
    </citation>
    <scope>NUCLEOTIDE SEQUENCE [LARGE SCALE GENOMIC DNA]</scope>
    <source>
        <strain>PRwf-1</strain>
    </source>
</reference>
<protein>
    <recommendedName>
        <fullName evidence="1">Chorismate synthase</fullName>
        <shortName evidence="1">CS</shortName>
        <ecNumber evidence="1">4.2.3.5</ecNumber>
    </recommendedName>
    <alternativeName>
        <fullName evidence="1">5-enolpyruvylshikimate-3-phosphate phospholyase</fullName>
    </alternativeName>
</protein>
<evidence type="ECO:0000255" key="1">
    <source>
        <dbReference type="HAMAP-Rule" id="MF_00300"/>
    </source>
</evidence>
<proteinExistence type="inferred from homology"/>